<organism>
    <name type="scientific">Saccharolobus solfataricus (strain ATCC 35092 / DSM 1617 / JCM 11322 / P2)</name>
    <name type="common">Sulfolobus solfataricus</name>
    <dbReference type="NCBI Taxonomy" id="273057"/>
    <lineage>
        <taxon>Archaea</taxon>
        <taxon>Thermoproteota</taxon>
        <taxon>Thermoprotei</taxon>
        <taxon>Sulfolobales</taxon>
        <taxon>Sulfolobaceae</taxon>
        <taxon>Saccharolobus</taxon>
    </lineage>
</organism>
<sequence>MKIEVNENLIKHLENLSLIQLSGEEEKILEKDLANIIKFFEKINELDLSNVEPLFHPLPQGRLRKDVPRDPLDRENALKNVKRKEDGYIVGPRTYGE</sequence>
<reference key="1">
    <citation type="journal article" date="2001" name="Proc. Natl. Acad. Sci. U.S.A.">
        <title>The complete genome of the crenarchaeon Sulfolobus solfataricus P2.</title>
        <authorList>
            <person name="She Q."/>
            <person name="Singh R.K."/>
            <person name="Confalonieri F."/>
            <person name="Zivanovic Y."/>
            <person name="Allard G."/>
            <person name="Awayez M.J."/>
            <person name="Chan-Weiher C.C.-Y."/>
            <person name="Clausen I.G."/>
            <person name="Curtis B.A."/>
            <person name="De Moors A."/>
            <person name="Erauso G."/>
            <person name="Fletcher C."/>
            <person name="Gordon P.M.K."/>
            <person name="Heikamp-de Jong I."/>
            <person name="Jeffries A.C."/>
            <person name="Kozera C.J."/>
            <person name="Medina N."/>
            <person name="Peng X."/>
            <person name="Thi-Ngoc H.P."/>
            <person name="Redder P."/>
            <person name="Schenk M.E."/>
            <person name="Theriault C."/>
            <person name="Tolstrup N."/>
            <person name="Charlebois R.L."/>
            <person name="Doolittle W.F."/>
            <person name="Duguet M."/>
            <person name="Gaasterland T."/>
            <person name="Garrett R.A."/>
            <person name="Ragan M.A."/>
            <person name="Sensen C.W."/>
            <person name="Van der Oost J."/>
        </authorList>
    </citation>
    <scope>NUCLEOTIDE SEQUENCE [LARGE SCALE GENOMIC DNA]</scope>
    <source>
        <strain>ATCC 35092 / DSM 1617 / JCM 11322 / P2</strain>
    </source>
</reference>
<evidence type="ECO:0000255" key="1">
    <source>
        <dbReference type="HAMAP-Rule" id="MF_00122"/>
    </source>
</evidence>
<dbReference type="EC" id="6.3.5.-" evidence="1"/>
<dbReference type="EMBL" id="AE006641">
    <property type="protein sequence ID" value="AAK41232.1"/>
    <property type="molecule type" value="Genomic_DNA"/>
</dbReference>
<dbReference type="PIR" id="A90247">
    <property type="entry name" value="A90247"/>
</dbReference>
<dbReference type="RefSeq" id="WP_009992398.1">
    <property type="nucleotide sequence ID" value="NC_002754.1"/>
</dbReference>
<dbReference type="SMR" id="Q97ZG0"/>
<dbReference type="FunCoup" id="Q97ZG0">
    <property type="interactions" value="39"/>
</dbReference>
<dbReference type="STRING" id="273057.SSO6855"/>
<dbReference type="PaxDb" id="273057-SSO6855"/>
<dbReference type="EnsemblBacteria" id="AAK41232">
    <property type="protein sequence ID" value="AAK41232"/>
    <property type="gene ID" value="SSO6855"/>
</dbReference>
<dbReference type="GeneID" id="44129887"/>
<dbReference type="KEGG" id="sso:SSO6855"/>
<dbReference type="PATRIC" id="fig|273057.12.peg.954"/>
<dbReference type="eggNOG" id="arCOG02726">
    <property type="taxonomic scope" value="Archaea"/>
</dbReference>
<dbReference type="HOGENOM" id="CLU_105899_4_1_2"/>
<dbReference type="InParanoid" id="Q97ZG0"/>
<dbReference type="PhylomeDB" id="Q97ZG0"/>
<dbReference type="Proteomes" id="UP000001974">
    <property type="component" value="Chromosome"/>
</dbReference>
<dbReference type="GO" id="GO:0050566">
    <property type="term" value="F:asparaginyl-tRNA synthase (glutamine-hydrolyzing) activity"/>
    <property type="evidence" value="ECO:0007669"/>
    <property type="project" value="RHEA"/>
</dbReference>
<dbReference type="GO" id="GO:0005524">
    <property type="term" value="F:ATP binding"/>
    <property type="evidence" value="ECO:0007669"/>
    <property type="project" value="UniProtKB-KW"/>
</dbReference>
<dbReference type="GO" id="GO:0050567">
    <property type="term" value="F:glutaminyl-tRNA synthase (glutamine-hydrolyzing) activity"/>
    <property type="evidence" value="ECO:0007669"/>
    <property type="project" value="UniProtKB-UniRule"/>
</dbReference>
<dbReference type="GO" id="GO:0070681">
    <property type="term" value="P:glutaminyl-tRNAGln biosynthesis via transamidation"/>
    <property type="evidence" value="ECO:0000318"/>
    <property type="project" value="GO_Central"/>
</dbReference>
<dbReference type="GO" id="GO:0006450">
    <property type="term" value="P:regulation of translational fidelity"/>
    <property type="evidence" value="ECO:0007669"/>
    <property type="project" value="InterPro"/>
</dbReference>
<dbReference type="GO" id="GO:0006412">
    <property type="term" value="P:translation"/>
    <property type="evidence" value="ECO:0007669"/>
    <property type="project" value="UniProtKB-UniRule"/>
</dbReference>
<dbReference type="Gene3D" id="1.10.20.60">
    <property type="entry name" value="Glu-tRNAGln amidotransferase C subunit, N-terminal domain"/>
    <property type="match status" value="1"/>
</dbReference>
<dbReference type="HAMAP" id="MF_00122">
    <property type="entry name" value="GatC"/>
    <property type="match status" value="1"/>
</dbReference>
<dbReference type="InterPro" id="IPR036113">
    <property type="entry name" value="Asp/Glu-ADT_sf_sub_c"/>
</dbReference>
<dbReference type="InterPro" id="IPR003837">
    <property type="entry name" value="GatC"/>
</dbReference>
<dbReference type="NCBIfam" id="TIGR00135">
    <property type="entry name" value="gatC"/>
    <property type="match status" value="1"/>
</dbReference>
<dbReference type="NCBIfam" id="NF000684">
    <property type="entry name" value="PRK00034.3-4"/>
    <property type="match status" value="1"/>
</dbReference>
<dbReference type="PANTHER" id="PTHR15004">
    <property type="entry name" value="GLUTAMYL-TRNA(GLN) AMIDOTRANSFERASE SUBUNIT C, MITOCHONDRIAL"/>
    <property type="match status" value="1"/>
</dbReference>
<dbReference type="PANTHER" id="PTHR15004:SF0">
    <property type="entry name" value="GLUTAMYL-TRNA(GLN) AMIDOTRANSFERASE SUBUNIT C, MITOCHONDRIAL"/>
    <property type="match status" value="1"/>
</dbReference>
<dbReference type="Pfam" id="PF02686">
    <property type="entry name" value="GatC"/>
    <property type="match status" value="1"/>
</dbReference>
<dbReference type="SUPFAM" id="SSF141000">
    <property type="entry name" value="Glu-tRNAGln amidotransferase C subunit"/>
    <property type="match status" value="1"/>
</dbReference>
<protein>
    <recommendedName>
        <fullName>Glutamyl-tRNA(Gln) amidotransferase subunit C</fullName>
        <shortName>Glu-ADT subunit C</shortName>
        <ecNumber evidence="1">6.3.5.-</ecNumber>
    </recommendedName>
</protein>
<name>GATC_SACS2</name>
<keyword id="KW-0067">ATP-binding</keyword>
<keyword id="KW-0436">Ligase</keyword>
<keyword id="KW-0547">Nucleotide-binding</keyword>
<keyword id="KW-0648">Protein biosynthesis</keyword>
<keyword id="KW-1185">Reference proteome</keyword>
<gene>
    <name evidence="1" type="primary">gatC</name>
    <name type="ordered locus">SSO6855</name>
</gene>
<comment type="function">
    <text evidence="1">Allows the formation of correctly charged Asn-tRNA(Asn) or Gln-tRNA(Gln) through the transamidation of misacylated Asp-tRNA(Asn) or Glu-tRNA(Gln) in organisms which lack either or both of asparaginyl-tRNA or glutaminyl-tRNA synthetases. The reaction takes place in the presence of glutamine and ATP through an activated phospho-Asp-tRNA(Asn) or phospho-Glu-tRNA(Gln).</text>
</comment>
<comment type="catalytic activity">
    <reaction evidence="1">
        <text>L-glutamyl-tRNA(Gln) + L-glutamine + ATP + H2O = L-glutaminyl-tRNA(Gln) + L-glutamate + ADP + phosphate + H(+)</text>
        <dbReference type="Rhea" id="RHEA:17521"/>
        <dbReference type="Rhea" id="RHEA-COMP:9681"/>
        <dbReference type="Rhea" id="RHEA-COMP:9684"/>
        <dbReference type="ChEBI" id="CHEBI:15377"/>
        <dbReference type="ChEBI" id="CHEBI:15378"/>
        <dbReference type="ChEBI" id="CHEBI:29985"/>
        <dbReference type="ChEBI" id="CHEBI:30616"/>
        <dbReference type="ChEBI" id="CHEBI:43474"/>
        <dbReference type="ChEBI" id="CHEBI:58359"/>
        <dbReference type="ChEBI" id="CHEBI:78520"/>
        <dbReference type="ChEBI" id="CHEBI:78521"/>
        <dbReference type="ChEBI" id="CHEBI:456216"/>
    </reaction>
</comment>
<comment type="catalytic activity">
    <reaction evidence="1">
        <text>L-aspartyl-tRNA(Asn) + L-glutamine + ATP + H2O = L-asparaginyl-tRNA(Asn) + L-glutamate + ADP + phosphate + 2 H(+)</text>
        <dbReference type="Rhea" id="RHEA:14513"/>
        <dbReference type="Rhea" id="RHEA-COMP:9674"/>
        <dbReference type="Rhea" id="RHEA-COMP:9677"/>
        <dbReference type="ChEBI" id="CHEBI:15377"/>
        <dbReference type="ChEBI" id="CHEBI:15378"/>
        <dbReference type="ChEBI" id="CHEBI:29985"/>
        <dbReference type="ChEBI" id="CHEBI:30616"/>
        <dbReference type="ChEBI" id="CHEBI:43474"/>
        <dbReference type="ChEBI" id="CHEBI:58359"/>
        <dbReference type="ChEBI" id="CHEBI:78515"/>
        <dbReference type="ChEBI" id="CHEBI:78516"/>
        <dbReference type="ChEBI" id="CHEBI:456216"/>
    </reaction>
</comment>
<comment type="subunit">
    <text evidence="1">Heterotrimer of A, B and C subunits.</text>
</comment>
<comment type="similarity">
    <text evidence="1">Belongs to the GatC family.</text>
</comment>
<feature type="chain" id="PRO_0000105361" description="Glutamyl-tRNA(Gln) amidotransferase subunit C">
    <location>
        <begin position="1"/>
        <end position="97"/>
    </location>
</feature>
<accession>Q97ZG0</accession>
<proteinExistence type="inferred from homology"/>